<feature type="chain" id="PRO_0000202506" description="Putative uncharacterized protein YBR190W">
    <location>
        <begin position="1"/>
        <end position="103"/>
    </location>
</feature>
<gene>
    <name type="ordered locus">YBR190W</name>
    <name type="ORF">YBR1318</name>
</gene>
<comment type="miscellaneous">
    <text evidence="1">Partially overlaps RPL21A.</text>
</comment>
<comment type="caution">
    <text evidence="2">Product of a dubious gene prediction unlikely to encode a functional protein. Because of that it is not part of the S.cerevisiae S288c complete/reference proteome set.</text>
</comment>
<name>YB40_YEAST</name>
<protein>
    <recommendedName>
        <fullName>Putative uncharacterized protein YBR190W</fullName>
    </recommendedName>
</protein>
<proteinExistence type="uncertain"/>
<reference key="1">
    <citation type="journal article" date="1994" name="Yeast">
        <title>A 12.5 kb fragment of the yeast chromosome II contains two adjacent genes encoding ribosomal proteins and six putative new genes, one of which encodes a putative transcriptional factor.</title>
        <authorList>
            <person name="Demolis N."/>
            <person name="Jacquet M."/>
            <person name="Mallet L."/>
        </authorList>
    </citation>
    <scope>NUCLEOTIDE SEQUENCE [GENOMIC DNA]</scope>
    <source>
        <strain>ATCC 204508 / S288c</strain>
    </source>
</reference>
<reference key="2">
    <citation type="journal article" date="1994" name="EMBO J.">
        <title>Complete DNA sequence of yeast chromosome II.</title>
        <authorList>
            <person name="Feldmann H."/>
            <person name="Aigle M."/>
            <person name="Aljinovic G."/>
            <person name="Andre B."/>
            <person name="Baclet M.C."/>
            <person name="Barthe C."/>
            <person name="Baur A."/>
            <person name="Becam A.-M."/>
            <person name="Biteau N."/>
            <person name="Boles E."/>
            <person name="Brandt T."/>
            <person name="Brendel M."/>
            <person name="Brueckner M."/>
            <person name="Bussereau F."/>
            <person name="Christiansen C."/>
            <person name="Contreras R."/>
            <person name="Crouzet M."/>
            <person name="Cziepluch C."/>
            <person name="Demolis N."/>
            <person name="Delaveau T."/>
            <person name="Doignon F."/>
            <person name="Domdey H."/>
            <person name="Duesterhus S."/>
            <person name="Dubois E."/>
            <person name="Dujon B."/>
            <person name="El Bakkoury M."/>
            <person name="Entian K.-D."/>
            <person name="Feuermann M."/>
            <person name="Fiers W."/>
            <person name="Fobo G.M."/>
            <person name="Fritz C."/>
            <person name="Gassenhuber J."/>
            <person name="Glansdorff N."/>
            <person name="Goffeau A."/>
            <person name="Grivell L.A."/>
            <person name="de Haan M."/>
            <person name="Hein C."/>
            <person name="Herbert C.J."/>
            <person name="Hollenberg C.P."/>
            <person name="Holmstroem K."/>
            <person name="Jacq C."/>
            <person name="Jacquet M."/>
            <person name="Jauniaux J.-C."/>
            <person name="Jonniaux J.-L."/>
            <person name="Kallesoee T."/>
            <person name="Kiesau P."/>
            <person name="Kirchrath L."/>
            <person name="Koetter P."/>
            <person name="Korol S."/>
            <person name="Liebl S."/>
            <person name="Logghe M."/>
            <person name="Lohan A.J.E."/>
            <person name="Louis E.J."/>
            <person name="Li Z.Y."/>
            <person name="Maat M.J."/>
            <person name="Mallet L."/>
            <person name="Mannhaupt G."/>
            <person name="Messenguy F."/>
            <person name="Miosga T."/>
            <person name="Molemans F."/>
            <person name="Mueller S."/>
            <person name="Nasr F."/>
            <person name="Obermaier B."/>
            <person name="Perea J."/>
            <person name="Pierard A."/>
            <person name="Piravandi E."/>
            <person name="Pohl F.M."/>
            <person name="Pohl T.M."/>
            <person name="Potier S."/>
            <person name="Proft M."/>
            <person name="Purnelle B."/>
            <person name="Ramezani Rad M."/>
            <person name="Rieger M."/>
            <person name="Rose M."/>
            <person name="Schaaff-Gerstenschlaeger I."/>
            <person name="Scherens B."/>
            <person name="Schwarzlose C."/>
            <person name="Skala J."/>
            <person name="Slonimski P.P."/>
            <person name="Smits P.H.M."/>
            <person name="Souciet J.-L."/>
            <person name="Steensma H.Y."/>
            <person name="Stucka R."/>
            <person name="Urrestarazu L.A."/>
            <person name="van der Aart Q.J.M."/>
            <person name="Van Dyck L."/>
            <person name="Vassarotti A."/>
            <person name="Vetter I."/>
            <person name="Vierendeels F."/>
            <person name="Vissers S."/>
            <person name="Wagner G."/>
            <person name="de Wergifosse P."/>
            <person name="Wolfe K.H."/>
            <person name="Zagulski M."/>
            <person name="Zimmermann F.K."/>
            <person name="Mewes H.-W."/>
            <person name="Kleine K."/>
        </authorList>
    </citation>
    <scope>NUCLEOTIDE SEQUENCE [LARGE SCALE GENOMIC DNA]</scope>
    <source>
        <strain>ATCC 204508 / S288c</strain>
    </source>
</reference>
<reference key="3">
    <citation type="journal article" date="2014" name="G3 (Bethesda)">
        <title>The reference genome sequence of Saccharomyces cerevisiae: Then and now.</title>
        <authorList>
            <person name="Engel S.R."/>
            <person name="Dietrich F.S."/>
            <person name="Fisk D.G."/>
            <person name="Binkley G."/>
            <person name="Balakrishnan R."/>
            <person name="Costanzo M.C."/>
            <person name="Dwight S.S."/>
            <person name="Hitz B.C."/>
            <person name="Karra K."/>
            <person name="Nash R.S."/>
            <person name="Weng S."/>
            <person name="Wong E.D."/>
            <person name="Lloyd P."/>
            <person name="Skrzypek M.S."/>
            <person name="Miyasato S.R."/>
            <person name="Simison M."/>
            <person name="Cherry J.M."/>
        </authorList>
    </citation>
    <scope>GENOME REANNOTATION</scope>
    <source>
        <strain>ATCC 204508 / S288c</strain>
    </source>
</reference>
<evidence type="ECO:0000305" key="1"/>
<evidence type="ECO:0000305" key="2">
    <source>
    </source>
</evidence>
<accession>P38303</accession>
<sequence length="103" mass="11028">MSLNIAFFPAARTCSEPRKSTAAKPPLMCWPTATSGRAGSPGSGGGHNTRAGKVNGLCASVKFYHQWSVMSGKDNIESSVQFQALPIELWNKRTKTKITSNNG</sequence>
<dbReference type="EMBL" id="U02073">
    <property type="protein sequence ID" value="AAB60286.1"/>
    <property type="molecule type" value="Genomic_DNA"/>
</dbReference>
<dbReference type="EMBL" id="Z36059">
    <property type="protein sequence ID" value="CAA85152.1"/>
    <property type="molecule type" value="Genomic_DNA"/>
</dbReference>
<dbReference type="PIR" id="S46062">
    <property type="entry name" value="S46062"/>
</dbReference>
<dbReference type="DIP" id="DIP-1769N"/>
<dbReference type="IntAct" id="P38303">
    <property type="interactions" value="1"/>
</dbReference>
<dbReference type="MINT" id="P38303"/>
<dbReference type="PaxDb" id="4932-YBR190W"/>
<dbReference type="EnsemblFungi" id="YBR190W_mRNA">
    <property type="protein sequence ID" value="YBR190W"/>
    <property type="gene ID" value="YBR190W"/>
</dbReference>
<dbReference type="AGR" id="SGD:S000000394"/>
<dbReference type="SGD" id="S000000394">
    <property type="gene designation" value="YBR190W"/>
</dbReference>
<dbReference type="HOGENOM" id="CLU_2265266_0_0_1"/>
<dbReference type="OMA" id="NIAFFPA"/>
<organism>
    <name type="scientific">Saccharomyces cerevisiae (strain ATCC 204508 / S288c)</name>
    <name type="common">Baker's yeast</name>
    <dbReference type="NCBI Taxonomy" id="559292"/>
    <lineage>
        <taxon>Eukaryota</taxon>
        <taxon>Fungi</taxon>
        <taxon>Dikarya</taxon>
        <taxon>Ascomycota</taxon>
        <taxon>Saccharomycotina</taxon>
        <taxon>Saccharomycetes</taxon>
        <taxon>Saccharomycetales</taxon>
        <taxon>Saccharomycetaceae</taxon>
        <taxon>Saccharomyces</taxon>
    </lineage>
</organism>